<protein>
    <recommendedName>
        <fullName evidence="1">Threonine--tRNA ligase</fullName>
        <ecNumber evidence="1">6.1.1.3</ecNumber>
    </recommendedName>
    <alternativeName>
        <fullName evidence="1">Threonyl-tRNA synthetase</fullName>
        <shortName evidence="1">ThrRS</shortName>
    </alternativeName>
</protein>
<proteinExistence type="inferred from homology"/>
<comment type="function">
    <text evidence="1">Catalyzes the attachment of threonine to tRNA(Thr) in a two-step reaction: L-threonine is first activated by ATP to form Thr-AMP and then transferred to the acceptor end of tRNA(Thr). Also edits incorrectly charged L-seryl-tRNA(Thr).</text>
</comment>
<comment type="catalytic activity">
    <reaction evidence="1">
        <text>tRNA(Thr) + L-threonine + ATP = L-threonyl-tRNA(Thr) + AMP + diphosphate + H(+)</text>
        <dbReference type="Rhea" id="RHEA:24624"/>
        <dbReference type="Rhea" id="RHEA-COMP:9670"/>
        <dbReference type="Rhea" id="RHEA-COMP:9704"/>
        <dbReference type="ChEBI" id="CHEBI:15378"/>
        <dbReference type="ChEBI" id="CHEBI:30616"/>
        <dbReference type="ChEBI" id="CHEBI:33019"/>
        <dbReference type="ChEBI" id="CHEBI:57926"/>
        <dbReference type="ChEBI" id="CHEBI:78442"/>
        <dbReference type="ChEBI" id="CHEBI:78534"/>
        <dbReference type="ChEBI" id="CHEBI:456215"/>
        <dbReference type="EC" id="6.1.1.3"/>
    </reaction>
</comment>
<comment type="cofactor">
    <cofactor evidence="1">
        <name>Zn(2+)</name>
        <dbReference type="ChEBI" id="CHEBI:29105"/>
    </cofactor>
    <text evidence="1">Binds 1 zinc ion per subunit.</text>
</comment>
<comment type="subunit">
    <text evidence="1">Homodimer.</text>
</comment>
<comment type="subcellular location">
    <subcellularLocation>
        <location evidence="1">Cytoplasm</location>
    </subcellularLocation>
</comment>
<comment type="similarity">
    <text evidence="1">Belongs to the class-II aminoacyl-tRNA synthetase family.</text>
</comment>
<evidence type="ECO:0000255" key="1">
    <source>
        <dbReference type="HAMAP-Rule" id="MF_00184"/>
    </source>
</evidence>
<evidence type="ECO:0000255" key="2">
    <source>
        <dbReference type="PROSITE-ProRule" id="PRU01228"/>
    </source>
</evidence>
<keyword id="KW-0030">Aminoacyl-tRNA synthetase</keyword>
<keyword id="KW-0067">ATP-binding</keyword>
<keyword id="KW-0963">Cytoplasm</keyword>
<keyword id="KW-0436">Ligase</keyword>
<keyword id="KW-0479">Metal-binding</keyword>
<keyword id="KW-0547">Nucleotide-binding</keyword>
<keyword id="KW-0648">Protein biosynthesis</keyword>
<keyword id="KW-1185">Reference proteome</keyword>
<keyword id="KW-0694">RNA-binding</keyword>
<keyword id="KW-0820">tRNA-binding</keyword>
<keyword id="KW-0862">Zinc</keyword>
<dbReference type="EC" id="6.1.1.3" evidence="1"/>
<dbReference type="EMBL" id="CP000253">
    <property type="protein sequence ID" value="ABD30857.1"/>
    <property type="molecule type" value="Genomic_DNA"/>
</dbReference>
<dbReference type="RefSeq" id="WP_000435140.1">
    <property type="nucleotide sequence ID" value="NZ_LS483365.1"/>
</dbReference>
<dbReference type="RefSeq" id="YP_500293.1">
    <property type="nucleotide sequence ID" value="NC_007795.1"/>
</dbReference>
<dbReference type="SMR" id="Q2FXP7"/>
<dbReference type="STRING" id="93061.SAOUHSC_01788"/>
<dbReference type="PaxDb" id="1280-SAXN108_1709"/>
<dbReference type="GeneID" id="3920430"/>
<dbReference type="KEGG" id="sao:SAOUHSC_01788"/>
<dbReference type="PATRIC" id="fig|93061.5.peg.1630"/>
<dbReference type="eggNOG" id="COG0441">
    <property type="taxonomic scope" value="Bacteria"/>
</dbReference>
<dbReference type="HOGENOM" id="CLU_008554_0_1_9"/>
<dbReference type="OrthoDB" id="9802304at2"/>
<dbReference type="PRO" id="PR:Q2FXP7"/>
<dbReference type="Proteomes" id="UP000008816">
    <property type="component" value="Chromosome"/>
</dbReference>
<dbReference type="GO" id="GO:0005737">
    <property type="term" value="C:cytoplasm"/>
    <property type="evidence" value="ECO:0007669"/>
    <property type="project" value="UniProtKB-SubCell"/>
</dbReference>
<dbReference type="GO" id="GO:0005524">
    <property type="term" value="F:ATP binding"/>
    <property type="evidence" value="ECO:0007669"/>
    <property type="project" value="UniProtKB-UniRule"/>
</dbReference>
<dbReference type="GO" id="GO:0140096">
    <property type="term" value="F:catalytic activity, acting on a protein"/>
    <property type="evidence" value="ECO:0007669"/>
    <property type="project" value="UniProtKB-ARBA"/>
</dbReference>
<dbReference type="GO" id="GO:0046872">
    <property type="term" value="F:metal ion binding"/>
    <property type="evidence" value="ECO:0007669"/>
    <property type="project" value="UniProtKB-KW"/>
</dbReference>
<dbReference type="GO" id="GO:0004829">
    <property type="term" value="F:threonine-tRNA ligase activity"/>
    <property type="evidence" value="ECO:0000318"/>
    <property type="project" value="GO_Central"/>
</dbReference>
<dbReference type="GO" id="GO:0016740">
    <property type="term" value="F:transferase activity"/>
    <property type="evidence" value="ECO:0007669"/>
    <property type="project" value="UniProtKB-ARBA"/>
</dbReference>
<dbReference type="GO" id="GO:0000049">
    <property type="term" value="F:tRNA binding"/>
    <property type="evidence" value="ECO:0007669"/>
    <property type="project" value="UniProtKB-KW"/>
</dbReference>
<dbReference type="GO" id="GO:0006435">
    <property type="term" value="P:threonyl-tRNA aminoacylation"/>
    <property type="evidence" value="ECO:0000318"/>
    <property type="project" value="GO_Central"/>
</dbReference>
<dbReference type="CDD" id="cd01667">
    <property type="entry name" value="TGS_ThrRS"/>
    <property type="match status" value="1"/>
</dbReference>
<dbReference type="CDD" id="cd00860">
    <property type="entry name" value="ThrRS_anticodon"/>
    <property type="match status" value="1"/>
</dbReference>
<dbReference type="CDD" id="cd00771">
    <property type="entry name" value="ThrRS_core"/>
    <property type="match status" value="1"/>
</dbReference>
<dbReference type="FunFam" id="3.10.20.30:FF:000005">
    <property type="entry name" value="Threonine--tRNA ligase"/>
    <property type="match status" value="1"/>
</dbReference>
<dbReference type="FunFam" id="3.30.54.20:FF:000002">
    <property type="entry name" value="Threonine--tRNA ligase"/>
    <property type="match status" value="1"/>
</dbReference>
<dbReference type="FunFam" id="3.30.930.10:FF:000002">
    <property type="entry name" value="Threonine--tRNA ligase"/>
    <property type="match status" value="1"/>
</dbReference>
<dbReference type="FunFam" id="3.40.50.800:FF:000001">
    <property type="entry name" value="Threonine--tRNA ligase"/>
    <property type="match status" value="1"/>
</dbReference>
<dbReference type="FunFam" id="3.30.980.10:FF:000005">
    <property type="entry name" value="Threonyl-tRNA synthetase, mitochondrial"/>
    <property type="match status" value="1"/>
</dbReference>
<dbReference type="Gene3D" id="3.10.20.30">
    <property type="match status" value="1"/>
</dbReference>
<dbReference type="Gene3D" id="3.30.54.20">
    <property type="match status" value="1"/>
</dbReference>
<dbReference type="Gene3D" id="3.40.50.800">
    <property type="entry name" value="Anticodon-binding domain"/>
    <property type="match status" value="1"/>
</dbReference>
<dbReference type="Gene3D" id="3.30.930.10">
    <property type="entry name" value="Bira Bifunctional Protein, Domain 2"/>
    <property type="match status" value="1"/>
</dbReference>
<dbReference type="Gene3D" id="3.30.980.10">
    <property type="entry name" value="Threonyl-trna Synthetase, Chain A, domain 2"/>
    <property type="match status" value="1"/>
</dbReference>
<dbReference type="HAMAP" id="MF_00184">
    <property type="entry name" value="Thr_tRNA_synth"/>
    <property type="match status" value="1"/>
</dbReference>
<dbReference type="InterPro" id="IPR002314">
    <property type="entry name" value="aa-tRNA-synt_IIb"/>
</dbReference>
<dbReference type="InterPro" id="IPR006195">
    <property type="entry name" value="aa-tRNA-synth_II"/>
</dbReference>
<dbReference type="InterPro" id="IPR045864">
    <property type="entry name" value="aa-tRNA-synth_II/BPL/LPL"/>
</dbReference>
<dbReference type="InterPro" id="IPR004154">
    <property type="entry name" value="Anticodon-bd"/>
</dbReference>
<dbReference type="InterPro" id="IPR036621">
    <property type="entry name" value="Anticodon-bd_dom_sf"/>
</dbReference>
<dbReference type="InterPro" id="IPR012675">
    <property type="entry name" value="Beta-grasp_dom_sf"/>
</dbReference>
<dbReference type="InterPro" id="IPR004095">
    <property type="entry name" value="TGS"/>
</dbReference>
<dbReference type="InterPro" id="IPR012676">
    <property type="entry name" value="TGS-like"/>
</dbReference>
<dbReference type="InterPro" id="IPR002320">
    <property type="entry name" value="Thr-tRNA-ligase_IIa"/>
</dbReference>
<dbReference type="InterPro" id="IPR018163">
    <property type="entry name" value="Thr/Ala-tRNA-synth_IIc_edit"/>
</dbReference>
<dbReference type="InterPro" id="IPR047246">
    <property type="entry name" value="ThrRS_anticodon"/>
</dbReference>
<dbReference type="InterPro" id="IPR033728">
    <property type="entry name" value="ThrRS_core"/>
</dbReference>
<dbReference type="InterPro" id="IPR012947">
    <property type="entry name" value="tRNA_SAD"/>
</dbReference>
<dbReference type="NCBIfam" id="TIGR00418">
    <property type="entry name" value="thrS"/>
    <property type="match status" value="1"/>
</dbReference>
<dbReference type="PANTHER" id="PTHR11451:SF56">
    <property type="entry name" value="THREONINE--TRNA LIGASE 1"/>
    <property type="match status" value="1"/>
</dbReference>
<dbReference type="PANTHER" id="PTHR11451">
    <property type="entry name" value="THREONINE-TRNA LIGASE"/>
    <property type="match status" value="1"/>
</dbReference>
<dbReference type="Pfam" id="PF03129">
    <property type="entry name" value="HGTP_anticodon"/>
    <property type="match status" value="1"/>
</dbReference>
<dbReference type="Pfam" id="PF02824">
    <property type="entry name" value="TGS"/>
    <property type="match status" value="1"/>
</dbReference>
<dbReference type="Pfam" id="PF00587">
    <property type="entry name" value="tRNA-synt_2b"/>
    <property type="match status" value="1"/>
</dbReference>
<dbReference type="Pfam" id="PF07973">
    <property type="entry name" value="tRNA_SAD"/>
    <property type="match status" value="1"/>
</dbReference>
<dbReference type="PRINTS" id="PR01047">
    <property type="entry name" value="TRNASYNTHTHR"/>
</dbReference>
<dbReference type="SMART" id="SM00863">
    <property type="entry name" value="tRNA_SAD"/>
    <property type="match status" value="1"/>
</dbReference>
<dbReference type="SUPFAM" id="SSF52954">
    <property type="entry name" value="Class II aaRS ABD-related"/>
    <property type="match status" value="1"/>
</dbReference>
<dbReference type="SUPFAM" id="SSF55681">
    <property type="entry name" value="Class II aaRS and biotin synthetases"/>
    <property type="match status" value="1"/>
</dbReference>
<dbReference type="SUPFAM" id="SSF81271">
    <property type="entry name" value="TGS-like"/>
    <property type="match status" value="1"/>
</dbReference>
<dbReference type="SUPFAM" id="SSF55186">
    <property type="entry name" value="ThrRS/AlaRS common domain"/>
    <property type="match status" value="1"/>
</dbReference>
<dbReference type="PROSITE" id="PS50862">
    <property type="entry name" value="AA_TRNA_LIGASE_II"/>
    <property type="match status" value="1"/>
</dbReference>
<dbReference type="PROSITE" id="PS51880">
    <property type="entry name" value="TGS"/>
    <property type="match status" value="1"/>
</dbReference>
<reference key="1">
    <citation type="book" date="2006" name="Gram positive pathogens, 2nd edition">
        <title>The Staphylococcus aureus NCTC 8325 genome.</title>
        <editorList>
            <person name="Fischetti V."/>
            <person name="Novick R."/>
            <person name="Ferretti J."/>
            <person name="Portnoy D."/>
            <person name="Rood J."/>
        </editorList>
        <authorList>
            <person name="Gillaspy A.F."/>
            <person name="Worrell V."/>
            <person name="Orvis J."/>
            <person name="Roe B.A."/>
            <person name="Dyer D.W."/>
            <person name="Iandolo J.J."/>
        </authorList>
    </citation>
    <scope>NUCLEOTIDE SEQUENCE [LARGE SCALE GENOMIC DNA]</scope>
    <source>
        <strain>NCTC 8325 / PS 47</strain>
    </source>
</reference>
<accession>Q2FXP7</accession>
<sequence length="645" mass="74488">MEQINIQFPDGNKKAFDKGTTTEDIAQSISPGLRKKAVAGKFNGQLVDLTKPLETDGSIEIVTPGSEEALEVLRHSTAHLMAHAIKRLYGNVKFGVGPVIEGGFYYDFDIDQNISSDDFEQIEKTMKQIVNENMKIERKVVSRDEVKELFSNDEYKLELIDAIPEDENVTLYSQGDFTDLCRGVHVPSTAKIKEFKLLSTAGAYWRGDSNNKMLQRIYGTAFFDKKELKAHLQMLEERKERDHRKIGKELELFTNSQLVGAGLPLWLPNGATIRREIERYIVDKEVSMGYDHVYTPVLANVDLYKTSGHWDHYQEDMFPPMQLDETESMVLRPMNCPHHMMIYANKPHSYRELPIRIAELGTMHRYEASGAVSGLQRVRGMTLNDSHIFVRPDQIKEEFKRVVNMIIDVYKDFGFEDYSFRLSYRDPEDKEKYFDDDDMWNKAENMLKEAADELGLSYEEAIGEAAFYGPKLDVQVKTAMGKEETLSTAQLDFLLPERFDLTYIGQDGEHHRPVVIHRGVVSTMERFVAFLTEETKGAFPTWLAPKQVQIIPVNVDLHYDYARQLQDELKSQGVRVSIDDRNEKMGYKIREAQMQKIPYQIVVGDKEVENNQVNVRQYGSQDQETVEKDEFIWNLVDEIRLKKHR</sequence>
<feature type="chain" id="PRO_1000020521" description="Threonine--tRNA ligase">
    <location>
        <begin position="1"/>
        <end position="645"/>
    </location>
</feature>
<feature type="domain" description="TGS" evidence="2">
    <location>
        <begin position="1"/>
        <end position="63"/>
    </location>
</feature>
<feature type="region of interest" description="Catalytic" evidence="1">
    <location>
        <begin position="242"/>
        <end position="540"/>
    </location>
</feature>
<feature type="binding site" evidence="1">
    <location>
        <position position="336"/>
    </location>
    <ligand>
        <name>Zn(2+)</name>
        <dbReference type="ChEBI" id="CHEBI:29105"/>
    </ligand>
</feature>
<feature type="binding site" evidence="1">
    <location>
        <position position="387"/>
    </location>
    <ligand>
        <name>Zn(2+)</name>
        <dbReference type="ChEBI" id="CHEBI:29105"/>
    </ligand>
</feature>
<feature type="binding site" evidence="1">
    <location>
        <position position="517"/>
    </location>
    <ligand>
        <name>Zn(2+)</name>
        <dbReference type="ChEBI" id="CHEBI:29105"/>
    </ligand>
</feature>
<organism>
    <name type="scientific">Staphylococcus aureus (strain NCTC 8325 / PS 47)</name>
    <dbReference type="NCBI Taxonomy" id="93061"/>
    <lineage>
        <taxon>Bacteria</taxon>
        <taxon>Bacillati</taxon>
        <taxon>Bacillota</taxon>
        <taxon>Bacilli</taxon>
        <taxon>Bacillales</taxon>
        <taxon>Staphylococcaceae</taxon>
        <taxon>Staphylococcus</taxon>
    </lineage>
</organism>
<gene>
    <name evidence="1" type="primary">thrS</name>
    <name type="ordered locus">SAOUHSC_01788</name>
</gene>
<name>SYT_STAA8</name>